<organism>
    <name type="scientific">Chlorobium phaeovibrioides (strain DSM 265 / 1930)</name>
    <name type="common">Prosthecochloris vibrioformis (strain DSM 265)</name>
    <dbReference type="NCBI Taxonomy" id="290318"/>
    <lineage>
        <taxon>Bacteria</taxon>
        <taxon>Pseudomonadati</taxon>
        <taxon>Chlorobiota</taxon>
        <taxon>Chlorobiia</taxon>
        <taxon>Chlorobiales</taxon>
        <taxon>Chlorobiaceae</taxon>
        <taxon>Chlorobium/Pelodictyon group</taxon>
        <taxon>Chlorobium</taxon>
    </lineage>
</organism>
<evidence type="ECO:0000255" key="1">
    <source>
        <dbReference type="HAMAP-Rule" id="MF_00004"/>
    </source>
</evidence>
<feature type="chain" id="PRO_1000073799" description="Adenine phosphoribosyltransferase">
    <location>
        <begin position="1"/>
        <end position="177"/>
    </location>
</feature>
<accession>A4SGB1</accession>
<proteinExistence type="inferred from homology"/>
<sequence>MPIKSRIRAIPDYPKKGIMFRDITTLIKDPVGFRLVIDGLTQRYLENGVDFDVVVGVEARGFILGSALAYTLGKGFVPVRKPGKLPADVVSQEYELEYGTDKVEIHLDAILPGTRVLLVDDLLATGGTALAAAALVEKVGGVVAEMAFIVNLPDIGGERKILDKGYRVFSLTEFEGE</sequence>
<comment type="function">
    <text evidence="1">Catalyzes a salvage reaction resulting in the formation of AMP, that is energically less costly than de novo synthesis.</text>
</comment>
<comment type="catalytic activity">
    <reaction evidence="1">
        <text>AMP + diphosphate = 5-phospho-alpha-D-ribose 1-diphosphate + adenine</text>
        <dbReference type="Rhea" id="RHEA:16609"/>
        <dbReference type="ChEBI" id="CHEBI:16708"/>
        <dbReference type="ChEBI" id="CHEBI:33019"/>
        <dbReference type="ChEBI" id="CHEBI:58017"/>
        <dbReference type="ChEBI" id="CHEBI:456215"/>
        <dbReference type="EC" id="2.4.2.7"/>
    </reaction>
</comment>
<comment type="pathway">
    <text evidence="1">Purine metabolism; AMP biosynthesis via salvage pathway; AMP from adenine: step 1/1.</text>
</comment>
<comment type="subunit">
    <text evidence="1">Homodimer.</text>
</comment>
<comment type="subcellular location">
    <subcellularLocation>
        <location evidence="1">Cytoplasm</location>
    </subcellularLocation>
</comment>
<comment type="similarity">
    <text evidence="1">Belongs to the purine/pyrimidine phosphoribosyltransferase family.</text>
</comment>
<name>APT_CHLPM</name>
<protein>
    <recommendedName>
        <fullName evidence="1">Adenine phosphoribosyltransferase</fullName>
        <shortName evidence="1">APRT</shortName>
        <ecNumber evidence="1">2.4.2.7</ecNumber>
    </recommendedName>
</protein>
<gene>
    <name evidence="1" type="primary">apt</name>
    <name type="ordered locus">Cvib_1509</name>
</gene>
<dbReference type="EC" id="2.4.2.7" evidence="1"/>
<dbReference type="EMBL" id="CP000607">
    <property type="protein sequence ID" value="ABP37520.1"/>
    <property type="molecule type" value="Genomic_DNA"/>
</dbReference>
<dbReference type="SMR" id="A4SGB1"/>
<dbReference type="STRING" id="290318.Cvib_1509"/>
<dbReference type="KEGG" id="pvi:Cvib_1509"/>
<dbReference type="eggNOG" id="COG0503">
    <property type="taxonomic scope" value="Bacteria"/>
</dbReference>
<dbReference type="HOGENOM" id="CLU_063339_3_0_10"/>
<dbReference type="OrthoDB" id="9803963at2"/>
<dbReference type="UniPathway" id="UPA00588">
    <property type="reaction ID" value="UER00646"/>
</dbReference>
<dbReference type="GO" id="GO:0005737">
    <property type="term" value="C:cytoplasm"/>
    <property type="evidence" value="ECO:0007669"/>
    <property type="project" value="UniProtKB-SubCell"/>
</dbReference>
<dbReference type="GO" id="GO:0002055">
    <property type="term" value="F:adenine binding"/>
    <property type="evidence" value="ECO:0007669"/>
    <property type="project" value="TreeGrafter"/>
</dbReference>
<dbReference type="GO" id="GO:0003999">
    <property type="term" value="F:adenine phosphoribosyltransferase activity"/>
    <property type="evidence" value="ECO:0007669"/>
    <property type="project" value="UniProtKB-UniRule"/>
</dbReference>
<dbReference type="GO" id="GO:0016208">
    <property type="term" value="F:AMP binding"/>
    <property type="evidence" value="ECO:0007669"/>
    <property type="project" value="TreeGrafter"/>
</dbReference>
<dbReference type="GO" id="GO:0006168">
    <property type="term" value="P:adenine salvage"/>
    <property type="evidence" value="ECO:0007669"/>
    <property type="project" value="InterPro"/>
</dbReference>
<dbReference type="GO" id="GO:0044209">
    <property type="term" value="P:AMP salvage"/>
    <property type="evidence" value="ECO:0007669"/>
    <property type="project" value="UniProtKB-UniRule"/>
</dbReference>
<dbReference type="GO" id="GO:0006166">
    <property type="term" value="P:purine ribonucleoside salvage"/>
    <property type="evidence" value="ECO:0007669"/>
    <property type="project" value="UniProtKB-KW"/>
</dbReference>
<dbReference type="CDD" id="cd06223">
    <property type="entry name" value="PRTases_typeI"/>
    <property type="match status" value="1"/>
</dbReference>
<dbReference type="FunFam" id="3.40.50.2020:FF:000021">
    <property type="entry name" value="Adenine phosphoribosyltransferase"/>
    <property type="match status" value="1"/>
</dbReference>
<dbReference type="Gene3D" id="3.40.50.2020">
    <property type="match status" value="1"/>
</dbReference>
<dbReference type="HAMAP" id="MF_00004">
    <property type="entry name" value="Aden_phosphoribosyltr"/>
    <property type="match status" value="1"/>
</dbReference>
<dbReference type="InterPro" id="IPR005764">
    <property type="entry name" value="Ade_phspho_trans"/>
</dbReference>
<dbReference type="InterPro" id="IPR000836">
    <property type="entry name" value="PRibTrfase_dom"/>
</dbReference>
<dbReference type="InterPro" id="IPR029057">
    <property type="entry name" value="PRTase-like"/>
</dbReference>
<dbReference type="InterPro" id="IPR050054">
    <property type="entry name" value="UPRTase/APRTase"/>
</dbReference>
<dbReference type="NCBIfam" id="TIGR01090">
    <property type="entry name" value="apt"/>
    <property type="match status" value="1"/>
</dbReference>
<dbReference type="NCBIfam" id="NF002634">
    <property type="entry name" value="PRK02304.1-3"/>
    <property type="match status" value="1"/>
</dbReference>
<dbReference type="NCBIfam" id="NF002636">
    <property type="entry name" value="PRK02304.1-5"/>
    <property type="match status" value="1"/>
</dbReference>
<dbReference type="PANTHER" id="PTHR32315">
    <property type="entry name" value="ADENINE PHOSPHORIBOSYLTRANSFERASE"/>
    <property type="match status" value="1"/>
</dbReference>
<dbReference type="PANTHER" id="PTHR32315:SF3">
    <property type="entry name" value="ADENINE PHOSPHORIBOSYLTRANSFERASE"/>
    <property type="match status" value="1"/>
</dbReference>
<dbReference type="Pfam" id="PF00156">
    <property type="entry name" value="Pribosyltran"/>
    <property type="match status" value="1"/>
</dbReference>
<dbReference type="SUPFAM" id="SSF53271">
    <property type="entry name" value="PRTase-like"/>
    <property type="match status" value="1"/>
</dbReference>
<dbReference type="PROSITE" id="PS00103">
    <property type="entry name" value="PUR_PYR_PR_TRANSFER"/>
    <property type="match status" value="1"/>
</dbReference>
<reference key="1">
    <citation type="submission" date="2007-03" db="EMBL/GenBank/DDBJ databases">
        <title>Complete sequence of Prosthecochloris vibrioformis DSM 265.</title>
        <authorList>
            <consortium name="US DOE Joint Genome Institute"/>
            <person name="Copeland A."/>
            <person name="Lucas S."/>
            <person name="Lapidus A."/>
            <person name="Barry K."/>
            <person name="Detter J.C."/>
            <person name="Glavina del Rio T."/>
            <person name="Hammon N."/>
            <person name="Israni S."/>
            <person name="Pitluck S."/>
            <person name="Schmutz J."/>
            <person name="Larimer F."/>
            <person name="Land M."/>
            <person name="Hauser L."/>
            <person name="Mikhailova N."/>
            <person name="Li T."/>
            <person name="Overmann J."/>
            <person name="Schuster S.C."/>
            <person name="Bryant D.A."/>
            <person name="Richardson P."/>
        </authorList>
    </citation>
    <scope>NUCLEOTIDE SEQUENCE [LARGE SCALE GENOMIC DNA]</scope>
    <source>
        <strain>DSM 265 / 1930</strain>
    </source>
</reference>
<keyword id="KW-0963">Cytoplasm</keyword>
<keyword id="KW-0328">Glycosyltransferase</keyword>
<keyword id="KW-0660">Purine salvage</keyword>
<keyword id="KW-0808">Transferase</keyword>